<protein>
    <recommendedName>
        <fullName evidence="6">Protein IQ-DOMAIN 9</fullName>
        <shortName evidence="6">AtIQD9</shortName>
    </recommendedName>
</protein>
<keyword id="KW-0112">Calmodulin-binding</keyword>
<keyword id="KW-0539">Nucleus</keyword>
<keyword id="KW-1185">Reference proteome</keyword>
<sequence length="263" mass="30142">MGSGNLIKAIIRLKKSKQGTEKKKTSAVKPKKGSKKKGTSLVTRSEDWAATRIQTAFKAYKARKSLRRLKGIARAKLSTEKQSVKNQAVVTLRYLHSWSKIQSEIKARRVCMVTEWRLKNKRLEHQQKLEAKLHDVEVEWNGGSETKDEILERILQREEATIKRERALAYAFSHQWKADGKTQWLGSYELGNTNWGWSWKERWISARPWEVRYSVTPKKPKSSKTDSNSPAKRTVSLSSVPAKTPFPGARNTVKPRRLSFPGA</sequence>
<dbReference type="EMBL" id="AC002341">
    <property type="protein sequence ID" value="AAB67617.1"/>
    <property type="status" value="ALT_SEQ"/>
    <property type="molecule type" value="Genomic_DNA"/>
</dbReference>
<dbReference type="EMBL" id="CP002685">
    <property type="protein sequence ID" value="AEC08904.1"/>
    <property type="molecule type" value="Genomic_DNA"/>
</dbReference>
<dbReference type="EMBL" id="AK229389">
    <property type="protein sequence ID" value="BAF01251.1"/>
    <property type="molecule type" value="mRNA"/>
</dbReference>
<dbReference type="PIR" id="A84751">
    <property type="entry name" value="A84751"/>
</dbReference>
<dbReference type="RefSeq" id="NP_180946.2">
    <property type="nucleotide sequence ID" value="NM_128950.5"/>
</dbReference>
<dbReference type="SMR" id="Q0WNP8"/>
<dbReference type="FunCoup" id="Q0WNP8">
    <property type="interactions" value="826"/>
</dbReference>
<dbReference type="STRING" id="3702.Q0WNP8"/>
<dbReference type="GlyGen" id="Q0WNP8">
    <property type="glycosylation" value="1 site"/>
</dbReference>
<dbReference type="iPTMnet" id="Q0WNP8"/>
<dbReference type="PaxDb" id="3702-AT2G33990.1"/>
<dbReference type="ProteomicsDB" id="183280"/>
<dbReference type="EnsemblPlants" id="AT2G33990.1">
    <property type="protein sequence ID" value="AT2G33990.1"/>
    <property type="gene ID" value="AT2G33990"/>
</dbReference>
<dbReference type="GeneID" id="817960"/>
<dbReference type="Gramene" id="AT2G33990.1">
    <property type="protein sequence ID" value="AT2G33990.1"/>
    <property type="gene ID" value="AT2G33990"/>
</dbReference>
<dbReference type="KEGG" id="ath:AT2G33990"/>
<dbReference type="Araport" id="AT2G33990"/>
<dbReference type="TAIR" id="AT2G33990">
    <property type="gene designation" value="IQD9"/>
</dbReference>
<dbReference type="eggNOG" id="ENOG502QREU">
    <property type="taxonomic scope" value="Eukaryota"/>
</dbReference>
<dbReference type="HOGENOM" id="CLU_060053_1_0_1"/>
<dbReference type="InParanoid" id="Q0WNP8"/>
<dbReference type="OMA" id="TRSEDWA"/>
<dbReference type="OrthoDB" id="1923765at2759"/>
<dbReference type="PhylomeDB" id="Q0WNP8"/>
<dbReference type="PRO" id="PR:Q0WNP8"/>
<dbReference type="Proteomes" id="UP000006548">
    <property type="component" value="Chromosome 2"/>
</dbReference>
<dbReference type="ExpressionAtlas" id="Q0WNP8">
    <property type="expression patterns" value="baseline and differential"/>
</dbReference>
<dbReference type="GO" id="GO:0016604">
    <property type="term" value="C:nuclear body"/>
    <property type="evidence" value="ECO:0007669"/>
    <property type="project" value="UniProtKB-SubCell"/>
</dbReference>
<dbReference type="GO" id="GO:0005516">
    <property type="term" value="F:calmodulin binding"/>
    <property type="evidence" value="ECO:0007669"/>
    <property type="project" value="UniProtKB-KW"/>
</dbReference>
<dbReference type="PANTHER" id="PTHR32295">
    <property type="entry name" value="IQ-DOMAIN 5-RELATED"/>
    <property type="match status" value="1"/>
</dbReference>
<dbReference type="PANTHER" id="PTHR32295:SF93">
    <property type="entry name" value="PROTEIN IQ-DOMAIN 9"/>
    <property type="match status" value="1"/>
</dbReference>
<dbReference type="PROSITE" id="PS50096">
    <property type="entry name" value="IQ"/>
    <property type="match status" value="1"/>
</dbReference>
<name>IQD9_ARATH</name>
<evidence type="ECO:0000250" key="1">
    <source>
        <dbReference type="UniProtKB" id="Q9SF32"/>
    </source>
</evidence>
<evidence type="ECO:0000255" key="2">
    <source>
        <dbReference type="PROSITE-ProRule" id="PRU00116"/>
    </source>
</evidence>
<evidence type="ECO:0000255" key="3">
    <source>
        <dbReference type="PROSITE-ProRule" id="PRU00768"/>
    </source>
</evidence>
<evidence type="ECO:0000256" key="4">
    <source>
        <dbReference type="SAM" id="MobiDB-lite"/>
    </source>
</evidence>
<evidence type="ECO:0000269" key="5">
    <source>
    </source>
</evidence>
<evidence type="ECO:0000303" key="6">
    <source>
    </source>
</evidence>
<evidence type="ECO:0000305" key="7"/>
<evidence type="ECO:0000312" key="8">
    <source>
        <dbReference type="Araport" id="AT2G33990"/>
    </source>
</evidence>
<evidence type="ECO:0000312" key="9">
    <source>
        <dbReference type="EMBL" id="AAB67617.1"/>
    </source>
</evidence>
<feature type="chain" id="PRO_0000453116" description="Protein IQ-DOMAIN 9">
    <location>
        <begin position="1"/>
        <end position="263"/>
    </location>
</feature>
<feature type="domain" description="IQ" evidence="2">
    <location>
        <begin position="46"/>
        <end position="75"/>
    </location>
</feature>
<feature type="region of interest" description="Disordered" evidence="4">
    <location>
        <begin position="16"/>
        <end position="41"/>
    </location>
</feature>
<feature type="region of interest" description="Calmodulin-binding" evidence="6">
    <location>
        <begin position="59"/>
        <end position="78"/>
    </location>
</feature>
<feature type="region of interest" description="Disordered" evidence="4">
    <location>
        <begin position="216"/>
        <end position="263"/>
    </location>
</feature>
<feature type="short sequence motif" description="Nuclear localization signal 1" evidence="3">
    <location>
        <begin position="21"/>
        <end position="28"/>
    </location>
</feature>
<feature type="short sequence motif" description="Nuclear localization signal 2" evidence="3">
    <location>
        <begin position="107"/>
        <end position="114"/>
    </location>
</feature>
<feature type="compositionally biased region" description="Basic residues" evidence="4">
    <location>
        <begin position="25"/>
        <end position="38"/>
    </location>
</feature>
<feature type="compositionally biased region" description="Polar residues" evidence="4">
    <location>
        <begin position="226"/>
        <end position="241"/>
    </location>
</feature>
<proteinExistence type="evidence at protein level"/>
<reference key="1">
    <citation type="journal article" date="1999" name="Nature">
        <title>Sequence and analysis of chromosome 2 of the plant Arabidopsis thaliana.</title>
        <authorList>
            <person name="Lin X."/>
            <person name="Kaul S."/>
            <person name="Rounsley S.D."/>
            <person name="Shea T.P."/>
            <person name="Benito M.-I."/>
            <person name="Town C.D."/>
            <person name="Fujii C.Y."/>
            <person name="Mason T.M."/>
            <person name="Bowman C.L."/>
            <person name="Barnstead M.E."/>
            <person name="Feldblyum T.V."/>
            <person name="Buell C.R."/>
            <person name="Ketchum K.A."/>
            <person name="Lee J.J."/>
            <person name="Ronning C.M."/>
            <person name="Koo H.L."/>
            <person name="Moffat K.S."/>
            <person name="Cronin L.A."/>
            <person name="Shen M."/>
            <person name="Pai G."/>
            <person name="Van Aken S."/>
            <person name="Umayam L."/>
            <person name="Tallon L.J."/>
            <person name="Gill J.E."/>
            <person name="Adams M.D."/>
            <person name="Carrera A.J."/>
            <person name="Creasy T.H."/>
            <person name="Goodman H.M."/>
            <person name="Somerville C.R."/>
            <person name="Copenhaver G.P."/>
            <person name="Preuss D."/>
            <person name="Nierman W.C."/>
            <person name="White O."/>
            <person name="Eisen J.A."/>
            <person name="Salzberg S.L."/>
            <person name="Fraser C.M."/>
            <person name="Venter J.C."/>
        </authorList>
    </citation>
    <scope>NUCLEOTIDE SEQUENCE [LARGE SCALE GENOMIC DNA]</scope>
    <source>
        <strain>cv. Columbia</strain>
    </source>
</reference>
<reference key="2">
    <citation type="journal article" date="2017" name="Plant J.">
        <title>Araport11: a complete reannotation of the Arabidopsis thaliana reference genome.</title>
        <authorList>
            <person name="Cheng C.Y."/>
            <person name="Krishnakumar V."/>
            <person name="Chan A.P."/>
            <person name="Thibaud-Nissen F."/>
            <person name="Schobel S."/>
            <person name="Town C.D."/>
        </authorList>
    </citation>
    <scope>GENOME REANNOTATION</scope>
    <source>
        <strain>cv. Columbia</strain>
    </source>
</reference>
<reference key="3">
    <citation type="submission" date="2006-07" db="EMBL/GenBank/DDBJ databases">
        <title>Large-scale analysis of RIKEN Arabidopsis full-length (RAFL) cDNAs.</title>
        <authorList>
            <person name="Totoki Y."/>
            <person name="Seki M."/>
            <person name="Ishida J."/>
            <person name="Nakajima M."/>
            <person name="Enju A."/>
            <person name="Kamiya A."/>
            <person name="Narusaka M."/>
            <person name="Shin-i T."/>
            <person name="Nakagawa M."/>
            <person name="Sakamoto N."/>
            <person name="Oishi K."/>
            <person name="Kohara Y."/>
            <person name="Kobayashi M."/>
            <person name="Toyoda A."/>
            <person name="Sakaki Y."/>
            <person name="Sakurai T."/>
            <person name="Iida K."/>
            <person name="Akiyama K."/>
            <person name="Satou M."/>
            <person name="Toyoda T."/>
            <person name="Konagaya A."/>
            <person name="Carninci P."/>
            <person name="Kawai J."/>
            <person name="Hayashizaki Y."/>
            <person name="Shinozaki K."/>
        </authorList>
    </citation>
    <scope>NUCLEOTIDE SEQUENCE [LARGE SCALE MRNA]</scope>
    <source>
        <strain>cv. Columbia</strain>
    </source>
</reference>
<reference key="4">
    <citation type="journal article" date="2005" name="BMC Evol. Biol.">
        <title>Genome-wide comparative analysis of the IQD gene families in Arabidopsis thaliana and Oryza sativa.</title>
        <authorList>
            <person name="Abel S."/>
            <person name="Savchenko T."/>
            <person name="Levy M."/>
        </authorList>
    </citation>
    <scope>INTERACTION WITH CALMODULIN</scope>
    <scope>GENE FAMILY</scope>
    <scope>NOMENCLATURE</scope>
    <source>
        <strain>cv. Columbia</strain>
    </source>
</reference>
<reference key="5">
    <citation type="journal article" date="2017" name="Plant Physiol.">
        <title>The IQD family of calmodulin-binding proteins links calcium signaling to microtubules, membrane subdomains, and the nucleus.</title>
        <authorList>
            <person name="Buerstenbinder K."/>
            <person name="Moeller B."/>
            <person name="Ploetner R."/>
            <person name="Stamm G."/>
            <person name="Hause G."/>
            <person name="Mitra D."/>
            <person name="Abel S."/>
        </authorList>
    </citation>
    <scope>SUBCELLULAR LOCATION</scope>
    <source>
        <strain>cv. Columbia</strain>
    </source>
</reference>
<reference key="6">
    <citation type="journal article" date="2017" name="Plant Signal. Behav.">
        <title>Functions of IQD proteins as hubs in cellular calcium and auxin signaling: A toolbox for shape formation and tissue-specification in plants?</title>
        <authorList>
            <person name="Buerstenbinder K."/>
            <person name="Mitra D."/>
            <person name="Quegwer J."/>
        </authorList>
    </citation>
    <scope>REVIEW</scope>
</reference>
<organism>
    <name type="scientific">Arabidopsis thaliana</name>
    <name type="common">Mouse-ear cress</name>
    <dbReference type="NCBI Taxonomy" id="3702"/>
    <lineage>
        <taxon>Eukaryota</taxon>
        <taxon>Viridiplantae</taxon>
        <taxon>Streptophyta</taxon>
        <taxon>Embryophyta</taxon>
        <taxon>Tracheophyta</taxon>
        <taxon>Spermatophyta</taxon>
        <taxon>Magnoliopsida</taxon>
        <taxon>eudicotyledons</taxon>
        <taxon>Gunneridae</taxon>
        <taxon>Pentapetalae</taxon>
        <taxon>rosids</taxon>
        <taxon>malvids</taxon>
        <taxon>Brassicales</taxon>
        <taxon>Brassicaceae</taxon>
        <taxon>Camelineae</taxon>
        <taxon>Arabidopsis</taxon>
    </lineage>
</organism>
<comment type="function">
    <text evidence="1">May be involved in cooperative interactions with calmodulins or calmodulin-like proteins (By similarity). Recruits calmodulin proteins to microtubules, thus being a potential scaffold in cellular signaling and trafficking (By similarity). May associate with nucleic acids and regulate gene expression at the transcriptional or post-transcriptional level (By similarity).</text>
</comment>
<comment type="subunit">
    <text evidence="1">Binds to multiple calmodulin (CaM) in the presence of Ca(2+) and CaM-like proteins.</text>
</comment>
<comment type="subcellular location">
    <subcellularLocation>
        <location evidence="3">Nucleus</location>
    </subcellularLocation>
    <subcellularLocation>
        <location evidence="5">Nucleus</location>
        <location evidence="5">Nuclear body</location>
    </subcellularLocation>
</comment>
<comment type="similarity">
    <text evidence="7">Belongs to the IQD family.</text>
</comment>
<comment type="sequence caution" evidence="7">
    <conflict type="erroneous gene model prediction">
        <sequence resource="EMBL-CDS" id="AAB67617"/>
    </conflict>
</comment>
<gene>
    <name evidence="6" type="primary">IQD9</name>
    <name evidence="8" type="ordered locus">At2g33990</name>
    <name evidence="9" type="ORF">T14G11.11</name>
</gene>
<accession>Q0WNP8</accession>
<accession>O22952</accession>